<accession>A5G742</accession>
<dbReference type="EMBL" id="CP000698">
    <property type="protein sequence ID" value="ABQ27610.1"/>
    <property type="molecule type" value="Genomic_DNA"/>
</dbReference>
<dbReference type="RefSeq" id="WP_011940271.1">
    <property type="nucleotide sequence ID" value="NC_009483.1"/>
</dbReference>
<dbReference type="SMR" id="A5G742"/>
<dbReference type="STRING" id="351605.Gura_3454"/>
<dbReference type="KEGG" id="gur:Gura_3454"/>
<dbReference type="HOGENOM" id="CLU_048975_0_1_7"/>
<dbReference type="OrthoDB" id="9795084at2"/>
<dbReference type="Proteomes" id="UP000006695">
    <property type="component" value="Chromosome"/>
</dbReference>
<dbReference type="GO" id="GO:0003690">
    <property type="term" value="F:double-stranded DNA binding"/>
    <property type="evidence" value="ECO:0007669"/>
    <property type="project" value="UniProtKB-UniRule"/>
</dbReference>
<dbReference type="GO" id="GO:0006310">
    <property type="term" value="P:DNA recombination"/>
    <property type="evidence" value="ECO:0007669"/>
    <property type="project" value="UniProtKB-KW"/>
</dbReference>
<dbReference type="GO" id="GO:0006303">
    <property type="term" value="P:double-strand break repair via nonhomologous end joining"/>
    <property type="evidence" value="ECO:0007669"/>
    <property type="project" value="UniProtKB-UniRule"/>
</dbReference>
<dbReference type="CDD" id="cd00789">
    <property type="entry name" value="KU_like"/>
    <property type="match status" value="1"/>
</dbReference>
<dbReference type="Gene3D" id="2.40.290.10">
    <property type="match status" value="1"/>
</dbReference>
<dbReference type="HAMAP" id="MF_01875">
    <property type="entry name" value="Prokaryotic_Ku"/>
    <property type="match status" value="1"/>
</dbReference>
<dbReference type="InterPro" id="IPR006164">
    <property type="entry name" value="Ku70/Ku80_beta-barrel_dom"/>
</dbReference>
<dbReference type="InterPro" id="IPR009187">
    <property type="entry name" value="Prok_Ku"/>
</dbReference>
<dbReference type="InterPro" id="IPR016194">
    <property type="entry name" value="SPOC-like_C_dom_sf"/>
</dbReference>
<dbReference type="NCBIfam" id="TIGR02772">
    <property type="entry name" value="Ku_bact"/>
    <property type="match status" value="1"/>
</dbReference>
<dbReference type="PANTHER" id="PTHR41251">
    <property type="entry name" value="NON-HOMOLOGOUS END JOINING PROTEIN KU"/>
    <property type="match status" value="1"/>
</dbReference>
<dbReference type="PANTHER" id="PTHR41251:SF1">
    <property type="entry name" value="NON-HOMOLOGOUS END JOINING PROTEIN KU"/>
    <property type="match status" value="1"/>
</dbReference>
<dbReference type="Pfam" id="PF02735">
    <property type="entry name" value="Ku"/>
    <property type="match status" value="1"/>
</dbReference>
<dbReference type="PIRSF" id="PIRSF006493">
    <property type="entry name" value="Prok_Ku"/>
    <property type="match status" value="1"/>
</dbReference>
<dbReference type="SMART" id="SM00559">
    <property type="entry name" value="Ku78"/>
    <property type="match status" value="1"/>
</dbReference>
<dbReference type="SUPFAM" id="SSF100939">
    <property type="entry name" value="SPOC domain-like"/>
    <property type="match status" value="1"/>
</dbReference>
<name>KU1_GEOUR</name>
<protein>
    <recommendedName>
        <fullName evidence="1">Non-homologous end joining protein Ku 1</fullName>
    </recommendedName>
</protein>
<organism>
    <name type="scientific">Geotalea uraniireducens (strain Rf4)</name>
    <name type="common">Geobacter uraniireducens</name>
    <dbReference type="NCBI Taxonomy" id="351605"/>
    <lineage>
        <taxon>Bacteria</taxon>
        <taxon>Pseudomonadati</taxon>
        <taxon>Thermodesulfobacteriota</taxon>
        <taxon>Desulfuromonadia</taxon>
        <taxon>Geobacterales</taxon>
        <taxon>Geobacteraceae</taxon>
        <taxon>Geotalea</taxon>
    </lineage>
</organism>
<reference key="1">
    <citation type="submission" date="2007-05" db="EMBL/GenBank/DDBJ databases">
        <title>Complete sequence of Geobacter uraniireducens Rf4.</title>
        <authorList>
            <consortium name="US DOE Joint Genome Institute"/>
            <person name="Copeland A."/>
            <person name="Lucas S."/>
            <person name="Lapidus A."/>
            <person name="Barry K."/>
            <person name="Detter J.C."/>
            <person name="Glavina del Rio T."/>
            <person name="Hammon N."/>
            <person name="Israni S."/>
            <person name="Dalin E."/>
            <person name="Tice H."/>
            <person name="Pitluck S."/>
            <person name="Chertkov O."/>
            <person name="Brettin T."/>
            <person name="Bruce D."/>
            <person name="Han C."/>
            <person name="Schmutz J."/>
            <person name="Larimer F."/>
            <person name="Land M."/>
            <person name="Hauser L."/>
            <person name="Kyrpides N."/>
            <person name="Mikhailova N."/>
            <person name="Shelobolina E."/>
            <person name="Aklujkar M."/>
            <person name="Lovley D."/>
            <person name="Richardson P."/>
        </authorList>
    </citation>
    <scope>NUCLEOTIDE SEQUENCE [LARGE SCALE GENOMIC DNA]</scope>
    <source>
        <strain>ATCC BAA-1134 / JCM 13001 / Rf4</strain>
    </source>
</reference>
<feature type="chain" id="PRO_0000389185" description="Non-homologous end joining protein Ku 1">
    <location>
        <begin position="1"/>
        <end position="261"/>
    </location>
</feature>
<feature type="domain" description="Ku" evidence="1">
    <location>
        <begin position="12"/>
        <end position="171"/>
    </location>
</feature>
<gene>
    <name evidence="1" type="primary">ku1</name>
    <name type="ordered locus">Gura_3454</name>
</gene>
<keyword id="KW-0227">DNA damage</keyword>
<keyword id="KW-0233">DNA recombination</keyword>
<keyword id="KW-0234">DNA repair</keyword>
<keyword id="KW-0238">DNA-binding</keyword>
<keyword id="KW-1185">Reference proteome</keyword>
<evidence type="ECO:0000255" key="1">
    <source>
        <dbReference type="HAMAP-Rule" id="MF_01875"/>
    </source>
</evidence>
<comment type="function">
    <text evidence="1">With LigD forms a non-homologous end joining (NHEJ) DNA repair enzyme, which repairs dsDNA breaks with reduced fidelity. Binds linear dsDNA with 5'- and 3'- overhangs but not closed circular dsDNA nor ssDNA. Recruits and stimulates the ligase activity of LigD.</text>
</comment>
<comment type="subunit">
    <text evidence="1">Homodimer. Interacts with LigD.</text>
</comment>
<comment type="similarity">
    <text evidence="1">Belongs to the prokaryotic Ku family.</text>
</comment>
<sequence length="261" mass="29440">MAVQGIWSGTISFSLVAIPVQLVKAVAIGRVSFRLLHDKDYSPLARRMFCPEQEKMVPPDEIIRGYEIGPDRYLPITDEELESVSPERSRTIEIVEFIDMNEVDPIYYDHPYYLVPLKGGEKAYRLLVEVMRRTNKAGLAKFVLAEREYLVAVKSTEGALTLITLHYSDEVLSDEDIAPKEGKIAAEVKSGIKKSIKNMMADFNPGKYADERRDKVMDLLKKKVKEKAPVAAPEVEKAEGEGPADLIAALEEIMREVKKNR</sequence>
<proteinExistence type="inferred from homology"/>